<keyword id="KW-0002">3D-structure</keyword>
<keyword id="KW-0328">Glycosyltransferase</keyword>
<keyword id="KW-0547">Nucleotide-binding</keyword>
<keyword id="KW-1185">Reference proteome</keyword>
<keyword id="KW-0808">Transferase</keyword>
<feature type="chain" id="PRO_0000433154" description="N-acetyl-alpha-D-glucosaminyl L-malate synthase">
    <location>
        <begin position="1"/>
        <end position="381"/>
    </location>
</feature>
<feature type="binding site" evidence="2 10">
    <location>
        <position position="16"/>
    </location>
    <ligand>
        <name>(S)-malate</name>
        <dbReference type="ChEBI" id="CHEBI:15589"/>
    </ligand>
</feature>
<feature type="binding site" evidence="2 10">
    <location>
        <position position="94"/>
    </location>
    <ligand>
        <name>(S)-malate</name>
        <dbReference type="ChEBI" id="CHEBI:15589"/>
    </ligand>
</feature>
<feature type="binding site" evidence="2 10">
    <location>
        <position position="122"/>
    </location>
    <ligand>
        <name>(S)-malate</name>
        <dbReference type="ChEBI" id="CHEBI:15589"/>
    </ligand>
</feature>
<feature type="binding site" evidence="2 10">
    <location>
        <position position="206"/>
    </location>
    <ligand>
        <name>UDP</name>
        <dbReference type="ChEBI" id="CHEBI:58223"/>
    </ligand>
</feature>
<feature type="binding site" evidence="2 10">
    <location>
        <position position="262"/>
    </location>
    <ligand>
        <name>UDP</name>
        <dbReference type="ChEBI" id="CHEBI:58223"/>
    </ligand>
</feature>
<feature type="binding site" evidence="2 10">
    <location>
        <position position="290"/>
    </location>
    <ligand>
        <name>UDP</name>
        <dbReference type="ChEBI" id="CHEBI:58223"/>
    </ligand>
</feature>
<feature type="strand" evidence="11">
    <location>
        <begin position="4"/>
        <end position="8"/>
    </location>
</feature>
<feature type="strand" evidence="12">
    <location>
        <begin position="11"/>
        <end position="14"/>
    </location>
</feature>
<feature type="helix" evidence="11">
    <location>
        <begin position="15"/>
        <end position="29"/>
    </location>
</feature>
<feature type="strand" evidence="11">
    <location>
        <begin position="33"/>
        <end position="37"/>
    </location>
</feature>
<feature type="strand" evidence="11">
    <location>
        <begin position="52"/>
        <end position="55"/>
    </location>
</feature>
<feature type="helix" evidence="11">
    <location>
        <begin position="70"/>
        <end position="85"/>
    </location>
</feature>
<feature type="strand" evidence="11">
    <location>
        <begin position="88"/>
        <end position="92"/>
    </location>
</feature>
<feature type="helix" evidence="11">
    <location>
        <begin position="98"/>
        <end position="108"/>
    </location>
</feature>
<feature type="turn" evidence="11">
    <location>
        <begin position="109"/>
        <end position="111"/>
    </location>
</feature>
<feature type="strand" evidence="11">
    <location>
        <begin position="113"/>
        <end position="118"/>
    </location>
</feature>
<feature type="helix" evidence="11">
    <location>
        <begin position="121"/>
        <end position="125"/>
    </location>
</feature>
<feature type="turn" evidence="11">
    <location>
        <begin position="126"/>
        <end position="129"/>
    </location>
</feature>
<feature type="turn" evidence="11">
    <location>
        <begin position="131"/>
        <end position="133"/>
    </location>
</feature>
<feature type="helix" evidence="11">
    <location>
        <begin position="134"/>
        <end position="143"/>
    </location>
</feature>
<feature type="strand" evidence="11">
    <location>
        <begin position="144"/>
        <end position="150"/>
    </location>
</feature>
<feature type="helix" evidence="11">
    <location>
        <begin position="152"/>
        <end position="161"/>
    </location>
</feature>
<feature type="strand" evidence="11">
    <location>
        <begin position="168"/>
        <end position="170"/>
    </location>
</feature>
<feature type="turn" evidence="11">
    <location>
        <begin position="177"/>
        <end position="179"/>
    </location>
</feature>
<feature type="helix" evidence="11">
    <location>
        <begin position="186"/>
        <end position="191"/>
    </location>
</feature>
<feature type="strand" evidence="12">
    <location>
        <begin position="196"/>
        <end position="198"/>
    </location>
</feature>
<feature type="strand" evidence="11">
    <location>
        <begin position="200"/>
        <end position="204"/>
    </location>
</feature>
<feature type="helix" evidence="11">
    <location>
        <begin position="209"/>
        <end position="211"/>
    </location>
</feature>
<feature type="helix" evidence="11">
    <location>
        <begin position="213"/>
        <end position="225"/>
    </location>
</feature>
<feature type="strand" evidence="11">
    <location>
        <begin position="230"/>
        <end position="234"/>
    </location>
</feature>
<feature type="helix" evidence="11">
    <location>
        <begin position="240"/>
        <end position="248"/>
    </location>
</feature>
<feature type="turn" evidence="11">
    <location>
        <begin position="249"/>
        <end position="251"/>
    </location>
</feature>
<feature type="helix" evidence="11">
    <location>
        <begin position="253"/>
        <end position="255"/>
    </location>
</feature>
<feature type="strand" evidence="12">
    <location>
        <begin position="256"/>
        <end position="261"/>
    </location>
</feature>
<feature type="helix" evidence="11">
    <location>
        <begin position="266"/>
        <end position="270"/>
    </location>
</feature>
<feature type="strand" evidence="11">
    <location>
        <begin position="273"/>
        <end position="277"/>
    </location>
</feature>
<feature type="helix" evidence="11">
    <location>
        <begin position="286"/>
        <end position="293"/>
    </location>
</feature>
<feature type="strand" evidence="11">
    <location>
        <begin position="298"/>
        <end position="301"/>
    </location>
</feature>
<feature type="turn" evidence="11">
    <location>
        <begin position="307"/>
        <end position="309"/>
    </location>
</feature>
<feature type="turn" evidence="11">
    <location>
        <begin position="312"/>
        <end position="314"/>
    </location>
</feature>
<feature type="strand" evidence="11">
    <location>
        <begin position="315"/>
        <end position="319"/>
    </location>
</feature>
<feature type="helix" evidence="11">
    <location>
        <begin position="324"/>
        <end position="336"/>
    </location>
</feature>
<feature type="helix" evidence="11">
    <location>
        <begin position="338"/>
        <end position="355"/>
    </location>
</feature>
<feature type="helix" evidence="11">
    <location>
        <begin position="358"/>
        <end position="371"/>
    </location>
</feature>
<gene>
    <name evidence="3" type="primary">bshA</name>
    <name evidence="5" type="ordered locus">BA_1558</name>
    <name evidence="7" type="ordered locus">BAS1445</name>
    <name evidence="6" type="ordered locus">GBAA_1558</name>
    <name evidence="9" type="ORF">BF27_423</name>
    <name evidence="8" type="ORF">TM00_07900</name>
</gene>
<protein>
    <recommendedName>
        <fullName evidence="3">N-acetyl-alpha-D-glucosaminyl L-malate synthase</fullName>
        <shortName evidence="3">GlcNAc-Mal synthase</shortName>
        <ecNumber evidence="2">2.4.1.-</ecNumber>
    </recommendedName>
    <alternativeName>
        <fullName evidence="1">L-malic acid glycosyltransferase BshA</fullName>
    </alternativeName>
</protein>
<comment type="function">
    <text evidence="2">Involved in bacillithiol (BSH) biosynthesis. Catalyzes the first step of the pathway, the formation of N-acetylglucosaminylmalate (GlcNAc-Mal) from UDP-N-acetylglucosamine (UDP-GlcNAc) and L-malate.</text>
</comment>
<comment type="catalytic activity">
    <reaction evidence="2">
        <text>(S)-malate + UDP-N-acetyl-alpha-D-glucosamine = (S)-malyl N-acetyl-alpha-D-glucosaminide + UDP + H(+)</text>
        <dbReference type="Rhea" id="RHEA:33383"/>
        <dbReference type="ChEBI" id="CHEBI:15378"/>
        <dbReference type="ChEBI" id="CHEBI:15589"/>
        <dbReference type="ChEBI" id="CHEBI:57705"/>
        <dbReference type="ChEBI" id="CHEBI:58223"/>
        <dbReference type="ChEBI" id="CHEBI:64870"/>
    </reaction>
</comment>
<comment type="biophysicochemical properties">
    <kinetics>
        <KM evidence="2">0.37 mM for UDP-GlcNAc</KM>
        <KM evidence="2">58 uM for L-malate</KM>
        <text evidence="2">kcat is 28 sec(-1).</text>
    </kinetics>
</comment>
<comment type="subunit">
    <text evidence="2">Dimer of tetramers.</text>
</comment>
<comment type="disruption phenotype">
    <text evidence="2">Mutant does not produce bacillithiol.</text>
</comment>
<comment type="similarity">
    <text evidence="4">Belongs to the glycosyltransferase group 1 family. Glycosyltransferase 4 subfamily.</text>
</comment>
<reference key="1">
    <citation type="journal article" date="2003" name="Nature">
        <title>The genome sequence of Bacillus anthracis Ames and comparison to closely related bacteria.</title>
        <authorList>
            <person name="Read T.D."/>
            <person name="Peterson S.N."/>
            <person name="Tourasse N.J."/>
            <person name="Baillie L.W."/>
            <person name="Paulsen I.T."/>
            <person name="Nelson K.E."/>
            <person name="Tettelin H."/>
            <person name="Fouts D.E."/>
            <person name="Eisen J.A."/>
            <person name="Gill S.R."/>
            <person name="Holtzapple E.K."/>
            <person name="Okstad O.A."/>
            <person name="Helgason E."/>
            <person name="Rilstone J."/>
            <person name="Wu M."/>
            <person name="Kolonay J.F."/>
            <person name="Beanan M.J."/>
            <person name="Dodson R.J."/>
            <person name="Brinkac L.M."/>
            <person name="Gwinn M.L."/>
            <person name="DeBoy R.T."/>
            <person name="Madpu R."/>
            <person name="Daugherty S.C."/>
            <person name="Durkin A.S."/>
            <person name="Haft D.H."/>
            <person name="Nelson W.C."/>
            <person name="Peterson J.D."/>
            <person name="Pop M."/>
            <person name="Khouri H.M."/>
            <person name="Radune D."/>
            <person name="Benton J.L."/>
            <person name="Mahamoud Y."/>
            <person name="Jiang L."/>
            <person name="Hance I.R."/>
            <person name="Weidman J.F."/>
            <person name="Berry K.J."/>
            <person name="Plaut R.D."/>
            <person name="Wolf A.M."/>
            <person name="Watkins K.L."/>
            <person name="Nierman W.C."/>
            <person name="Hazen A."/>
            <person name="Cline R.T."/>
            <person name="Redmond C."/>
            <person name="Thwaite J.E."/>
            <person name="White O."/>
            <person name="Salzberg S.L."/>
            <person name="Thomason B."/>
            <person name="Friedlander A.M."/>
            <person name="Koehler T.M."/>
            <person name="Hanna P.C."/>
            <person name="Kolstoe A.-B."/>
            <person name="Fraser C.M."/>
        </authorList>
    </citation>
    <scope>NUCLEOTIDE SEQUENCE [LARGE SCALE GENOMIC DNA]</scope>
    <source>
        <strain>Ames / isolate Porton</strain>
    </source>
</reference>
<reference key="2">
    <citation type="journal article" date="2009" name="J. Bacteriol.">
        <title>The complete genome sequence of Bacillus anthracis Ames 'Ancestor'.</title>
        <authorList>
            <person name="Ravel J."/>
            <person name="Jiang L."/>
            <person name="Stanley S.T."/>
            <person name="Wilson M.R."/>
            <person name="Decker R.S."/>
            <person name="Read T.D."/>
            <person name="Worsham P."/>
            <person name="Keim P.S."/>
            <person name="Salzberg S.L."/>
            <person name="Fraser-Liggett C.M."/>
            <person name="Rasko D.A."/>
        </authorList>
    </citation>
    <scope>NUCLEOTIDE SEQUENCE [LARGE SCALE GENOMIC DNA]</scope>
    <source>
        <strain>Ames ancestor</strain>
    </source>
</reference>
<reference key="3">
    <citation type="submission" date="2004-01" db="EMBL/GenBank/DDBJ databases">
        <title>Complete genome sequence of Bacillus anthracis Sterne.</title>
        <authorList>
            <person name="Brettin T.S."/>
            <person name="Bruce D."/>
            <person name="Challacombe J.F."/>
            <person name="Gilna P."/>
            <person name="Han C."/>
            <person name="Hill K."/>
            <person name="Hitchcock P."/>
            <person name="Jackson P."/>
            <person name="Keim P."/>
            <person name="Longmire J."/>
            <person name="Lucas S."/>
            <person name="Okinaka R."/>
            <person name="Richardson P."/>
            <person name="Rubin E."/>
            <person name="Tice H."/>
        </authorList>
    </citation>
    <scope>NUCLEOTIDE SEQUENCE [LARGE SCALE GENOMIC DNA]</scope>
    <source>
        <strain>Sterne</strain>
    </source>
</reference>
<reference key="4">
    <citation type="submission" date="2014-10" db="EMBL/GenBank/DDBJ databases">
        <authorList>
            <person name="Davenport K.W."/>
            <person name="Bishop-Lilly K.A."/>
            <person name="Broomall S.M."/>
            <person name="Chain P.S."/>
            <person name="Chertkov O."/>
            <person name="Coyne S.R."/>
            <person name="Daligault H.E."/>
            <person name="Erkkila T."/>
            <person name="Frey K.G."/>
            <person name="Gibbons H.S."/>
            <person name="Gu W."/>
            <person name="Jaissle J."/>
            <person name="Johnson S.L."/>
            <person name="Koroleva G.I."/>
            <person name="Ladner J.T."/>
            <person name="Lo C.-C."/>
            <person name="Minogue T.D."/>
            <person name="Munk C."/>
            <person name="Palacios G.F."/>
            <person name="Redden C.L."/>
            <person name="Rosenzweig C.N."/>
            <person name="Scholz M.B."/>
            <person name="Teshima H."/>
            <person name="Xu Y."/>
        </authorList>
    </citation>
    <scope>NUCLEOTIDE SEQUENCE [LARGE SCALE GENOMIC DNA]</scope>
    <source>
        <strain>2002013094</strain>
    </source>
</reference>
<reference key="5">
    <citation type="submission" date="2015-01" db="EMBL/GenBank/DDBJ databases">
        <title>Genome sequence of Bacillus anthracis Pollino isolated from a bovine anthrax-burial site in Italy.</title>
        <authorList>
            <person name="Fasanella A."/>
            <person name="Braun P."/>
            <person name="Grass G."/>
            <person name="Hanczaruk M."/>
            <person name="Aceti A."/>
            <person name="Serrecchia L."/>
            <person name="Marino L."/>
            <person name="Georgi E."/>
            <person name="Antwerpen M.H."/>
        </authorList>
    </citation>
    <scope>NUCLEOTIDE SEQUENCE [LARGE SCALE GENOMIC DNA]</scope>
    <source>
        <strain>Pollino</strain>
    </source>
</reference>
<reference key="6">
    <citation type="journal article" date="2008" name="Proteins">
        <title>Crystal structure of a family GT4 glycosyltransferase from Bacillus anthracis ORF BA1558.</title>
        <authorList>
            <person name="Ruane K.M."/>
            <person name="Davies G.J."/>
            <person name="Martinez-Fleites C."/>
        </authorList>
    </citation>
    <scope>X-RAY CRYSTALLOGRAPHY (3.10 ANGSTROMS)</scope>
</reference>
<reference key="7">
    <citation type="journal article" date="2010" name="Biochemistry">
        <title>Characterization of the N-acetyl-alpha-D-glucosaminyl L-malate synthase and deacetylase functions for bacillithiol biosynthesis in Bacillus anthracis.</title>
        <authorList>
            <person name="Parsonage D."/>
            <person name="Newton G.L."/>
            <person name="Holder R.C."/>
            <person name="Wallace B.D."/>
            <person name="Paige C."/>
            <person name="Hamilton C.J."/>
            <person name="Dos Santos P.C."/>
            <person name="Redinbo M.R."/>
            <person name="Reid S.D."/>
            <person name="Claiborne A."/>
        </authorList>
    </citation>
    <scope>X-RAY CRYSTALLOGRAPHY (3.31 ANGSTROMS) IN COMPLEX WITH (R)-MALIC ACID AND UDP</scope>
    <scope>FUNCTION</scope>
    <scope>CATALYTIC ACTIVITY</scope>
    <scope>BIOPHYSICOCHEMICAL PROPERTIES</scope>
    <scope>SUBUNIT</scope>
    <scope>DISRUPTION PHENOTYPE</scope>
    <source>
        <strain>Sterne</strain>
    </source>
</reference>
<evidence type="ECO:0000250" key="1">
    <source>
        <dbReference type="UniProtKB" id="P42982"/>
    </source>
</evidence>
<evidence type="ECO:0000269" key="2">
    <source>
    </source>
</evidence>
<evidence type="ECO:0000303" key="3">
    <source>
    </source>
</evidence>
<evidence type="ECO:0000305" key="4"/>
<evidence type="ECO:0000312" key="5">
    <source>
        <dbReference type="EMBL" id="AAP25494.1"/>
    </source>
</evidence>
<evidence type="ECO:0000312" key="6">
    <source>
        <dbReference type="EMBL" id="AAT30656.1"/>
    </source>
</evidence>
<evidence type="ECO:0000312" key="7">
    <source>
        <dbReference type="EMBL" id="AAT53765.1"/>
    </source>
</evidence>
<evidence type="ECO:0000312" key="8">
    <source>
        <dbReference type="EMBL" id="AJG28382.1"/>
    </source>
</evidence>
<evidence type="ECO:0000312" key="9">
    <source>
        <dbReference type="EMBL" id="AJH86298.1"/>
    </source>
</evidence>
<evidence type="ECO:0007744" key="10">
    <source>
        <dbReference type="PDB" id="3MBO"/>
    </source>
</evidence>
<evidence type="ECO:0007829" key="11">
    <source>
        <dbReference type="PDB" id="2JJM"/>
    </source>
</evidence>
<evidence type="ECO:0007829" key="12">
    <source>
        <dbReference type="PDB" id="3MBO"/>
    </source>
</evidence>
<organism>
    <name type="scientific">Bacillus anthracis</name>
    <dbReference type="NCBI Taxonomy" id="1392"/>
    <lineage>
        <taxon>Bacteria</taxon>
        <taxon>Bacillati</taxon>
        <taxon>Bacillota</taxon>
        <taxon>Bacilli</taxon>
        <taxon>Bacillales</taxon>
        <taxon>Bacillaceae</taxon>
        <taxon>Bacillus</taxon>
        <taxon>Bacillus cereus group</taxon>
    </lineage>
</organism>
<dbReference type="EC" id="2.4.1.-" evidence="2"/>
<dbReference type="EMBL" id="AE016879">
    <property type="protein sequence ID" value="AAP25494.1"/>
    <property type="molecule type" value="Genomic_DNA"/>
</dbReference>
<dbReference type="EMBL" id="AE017334">
    <property type="protein sequence ID" value="AAT30656.1"/>
    <property type="molecule type" value="Genomic_DNA"/>
</dbReference>
<dbReference type="EMBL" id="AE017225">
    <property type="protein sequence ID" value="AAT53765.1"/>
    <property type="molecule type" value="Genomic_DNA"/>
</dbReference>
<dbReference type="EMBL" id="CP009902">
    <property type="protein sequence ID" value="AJH86298.1"/>
    <property type="molecule type" value="Genomic_DNA"/>
</dbReference>
<dbReference type="EMBL" id="CP010813">
    <property type="protein sequence ID" value="AJG28382.1"/>
    <property type="molecule type" value="Genomic_DNA"/>
</dbReference>
<dbReference type="RefSeq" id="NP_844008.1">
    <property type="nucleotide sequence ID" value="NC_003997.3"/>
</dbReference>
<dbReference type="RefSeq" id="WP_000768296.1">
    <property type="nucleotide sequence ID" value="NZ_WXXJ01000001.1"/>
</dbReference>
<dbReference type="RefSeq" id="YP_027714.1">
    <property type="nucleotide sequence ID" value="NC_005945.1"/>
</dbReference>
<dbReference type="PDB" id="2JJM">
    <property type="method" value="X-ray"/>
    <property type="resolution" value="3.10 A"/>
    <property type="chains" value="A/B/C/D/E/F/G/H/I/J/K/L=1-381"/>
</dbReference>
<dbReference type="PDB" id="3MBO">
    <property type="method" value="X-ray"/>
    <property type="resolution" value="3.31 A"/>
    <property type="chains" value="A/B/C/D/E/F/G/H=1-381"/>
</dbReference>
<dbReference type="PDBsum" id="2JJM"/>
<dbReference type="PDBsum" id="3MBO"/>
<dbReference type="SMR" id="Q81ST7"/>
<dbReference type="STRING" id="261594.GBAA_1558"/>
<dbReference type="CAZy" id="GT4">
    <property type="family name" value="Glycosyltransferase Family 4"/>
</dbReference>
<dbReference type="DNASU" id="1086392"/>
<dbReference type="GeneID" id="45021530"/>
<dbReference type="KEGG" id="ban:BA_1558"/>
<dbReference type="KEGG" id="bar:GBAA_1558"/>
<dbReference type="KEGG" id="bat:BAS1445"/>
<dbReference type="PATRIC" id="fig|198094.11.peg.1528"/>
<dbReference type="eggNOG" id="COG0438">
    <property type="taxonomic scope" value="Bacteria"/>
</dbReference>
<dbReference type="HOGENOM" id="CLU_009583_2_5_9"/>
<dbReference type="OMA" id="FDAEQPF"/>
<dbReference type="OrthoDB" id="9810929at2"/>
<dbReference type="SABIO-RK" id="Q81ST7"/>
<dbReference type="EvolutionaryTrace" id="Q81ST7"/>
<dbReference type="Proteomes" id="UP000000427">
    <property type="component" value="Chromosome"/>
</dbReference>
<dbReference type="Proteomes" id="UP000000594">
    <property type="component" value="Chromosome"/>
</dbReference>
<dbReference type="GO" id="GO:0016757">
    <property type="term" value="F:glycosyltransferase activity"/>
    <property type="evidence" value="ECO:0007669"/>
    <property type="project" value="UniProtKB-KW"/>
</dbReference>
<dbReference type="GO" id="GO:0000166">
    <property type="term" value="F:nucleotide binding"/>
    <property type="evidence" value="ECO:0007669"/>
    <property type="project" value="UniProtKB-KW"/>
</dbReference>
<dbReference type="GO" id="GO:0071793">
    <property type="term" value="P:bacillithiol biosynthetic process"/>
    <property type="evidence" value="ECO:0007669"/>
    <property type="project" value="InterPro"/>
</dbReference>
<dbReference type="Gene3D" id="3.40.50.2000">
    <property type="entry name" value="Glycogen Phosphorylase B"/>
    <property type="match status" value="2"/>
</dbReference>
<dbReference type="InterPro" id="IPR001296">
    <property type="entry name" value="Glyco_trans_1"/>
</dbReference>
<dbReference type="InterPro" id="IPR028098">
    <property type="entry name" value="Glyco_trans_4-like_N"/>
</dbReference>
<dbReference type="InterPro" id="IPR050194">
    <property type="entry name" value="Glycosyltransferase_grp1"/>
</dbReference>
<dbReference type="InterPro" id="IPR023881">
    <property type="entry name" value="Thiol_BshA"/>
</dbReference>
<dbReference type="NCBIfam" id="TIGR03999">
    <property type="entry name" value="thiol_BshA"/>
    <property type="match status" value="1"/>
</dbReference>
<dbReference type="PANTHER" id="PTHR45947">
    <property type="entry name" value="SULFOQUINOVOSYL TRANSFERASE SQD2"/>
    <property type="match status" value="1"/>
</dbReference>
<dbReference type="PANTHER" id="PTHR45947:SF3">
    <property type="entry name" value="SULFOQUINOVOSYL TRANSFERASE SQD2"/>
    <property type="match status" value="1"/>
</dbReference>
<dbReference type="Pfam" id="PF13439">
    <property type="entry name" value="Glyco_transf_4"/>
    <property type="match status" value="1"/>
</dbReference>
<dbReference type="Pfam" id="PF00534">
    <property type="entry name" value="Glycos_transf_1"/>
    <property type="match status" value="1"/>
</dbReference>
<dbReference type="SUPFAM" id="SSF53756">
    <property type="entry name" value="UDP-Glycosyltransferase/glycogen phosphorylase"/>
    <property type="match status" value="1"/>
</dbReference>
<proteinExistence type="evidence at protein level"/>
<name>BSHA_BACAN</name>
<sequence length="381" mass="42843">MKLKIGITCYPSVGGSGVVGTELGKQLAERGHEIHFITSGLPFRLNKVYPNIYFHEVTVNQYSVFQYPPYDLALASKMAEVAQRENLDILHVHYAIPHAICAYLAKQMIGERIKIVTTLHGTDITVLGSDPSLNNLIRFGIEQSDVVTAVSHSLINETHELVKPNKDIQTVYNFIDERVYFKRDMTQLKKEYGISESEKILIHISNFRKVKRVQDVVQAFAKIVTEVDAKLLLVGDGPEFCTILQLVKNLHIEDRVLFLGKQDNVAELLAMSDLMLLLSEKESFGLVLLEAMACGVPCIGTRVGGIPEVIQHGDTGYLCEVGDTTGVADQAIQLLKDEELHRNMGERARESVYEQFRSEKIVSQYETIYYDVLRDDKNGKI</sequence>
<accession>Q81ST7</accession>
<accession>E9QTS5</accession>
<accession>E9QTS6</accession>
<accession>Q6I117</accession>
<accession>Q6KUX0</accession>